<comment type="function">
    <text evidence="1">Part of the twin-arginine translocation (Tat) system that transports large folded proteins containing a characteristic twin-arginine motif in their signal peptide across membranes. TatA could form the protein-conducting channel of the Tat system.</text>
</comment>
<comment type="subunit">
    <text evidence="1">Forms a complex with TatC.</text>
</comment>
<comment type="subcellular location">
    <subcellularLocation>
        <location evidence="1">Cell membrane</location>
        <topology evidence="1">Single-pass membrane protein</topology>
    </subcellularLocation>
</comment>
<comment type="similarity">
    <text evidence="1">Belongs to the TatA/E family.</text>
</comment>
<accession>B7IV78</accession>
<sequence>MFSNIGFPGLILILVAVLILFGPKKLPEIGKALGETLKEFKKSTKELTDDAFQEKEKKEKM</sequence>
<name>TATA_BACC2</name>
<gene>
    <name evidence="1" type="primary">tatA</name>
    <name type="ordered locus">BCG9842_B3099</name>
</gene>
<evidence type="ECO:0000255" key="1">
    <source>
        <dbReference type="HAMAP-Rule" id="MF_00236"/>
    </source>
</evidence>
<keyword id="KW-1003">Cell membrane</keyword>
<keyword id="KW-0472">Membrane</keyword>
<keyword id="KW-0653">Protein transport</keyword>
<keyword id="KW-0811">Translocation</keyword>
<keyword id="KW-0812">Transmembrane</keyword>
<keyword id="KW-1133">Transmembrane helix</keyword>
<keyword id="KW-0813">Transport</keyword>
<dbReference type="EMBL" id="CP001186">
    <property type="protein sequence ID" value="ACK97125.1"/>
    <property type="molecule type" value="Genomic_DNA"/>
</dbReference>
<dbReference type="RefSeq" id="WP_000492443.1">
    <property type="nucleotide sequence ID" value="NC_011772.1"/>
</dbReference>
<dbReference type="SMR" id="B7IV78"/>
<dbReference type="KEGG" id="bcg:BCG9842_B3099"/>
<dbReference type="HOGENOM" id="CLU_086034_6_0_9"/>
<dbReference type="Proteomes" id="UP000006744">
    <property type="component" value="Chromosome"/>
</dbReference>
<dbReference type="GO" id="GO:0033281">
    <property type="term" value="C:TAT protein transport complex"/>
    <property type="evidence" value="ECO:0007669"/>
    <property type="project" value="UniProtKB-UniRule"/>
</dbReference>
<dbReference type="GO" id="GO:0008320">
    <property type="term" value="F:protein transmembrane transporter activity"/>
    <property type="evidence" value="ECO:0007669"/>
    <property type="project" value="UniProtKB-UniRule"/>
</dbReference>
<dbReference type="GO" id="GO:0043953">
    <property type="term" value="P:protein transport by the Tat complex"/>
    <property type="evidence" value="ECO:0007669"/>
    <property type="project" value="UniProtKB-UniRule"/>
</dbReference>
<dbReference type="Gene3D" id="1.20.5.3310">
    <property type="match status" value="1"/>
</dbReference>
<dbReference type="HAMAP" id="MF_00236">
    <property type="entry name" value="TatA_E"/>
    <property type="match status" value="1"/>
</dbReference>
<dbReference type="InterPro" id="IPR003369">
    <property type="entry name" value="TatA/B/E"/>
</dbReference>
<dbReference type="InterPro" id="IPR006312">
    <property type="entry name" value="TatA/E"/>
</dbReference>
<dbReference type="NCBIfam" id="NF011430">
    <property type="entry name" value="PRK14861.1"/>
    <property type="match status" value="1"/>
</dbReference>
<dbReference type="NCBIfam" id="TIGR01411">
    <property type="entry name" value="tatAE"/>
    <property type="match status" value="1"/>
</dbReference>
<dbReference type="PANTHER" id="PTHR42982">
    <property type="entry name" value="SEC-INDEPENDENT PROTEIN TRANSLOCASE PROTEIN TATA"/>
    <property type="match status" value="1"/>
</dbReference>
<dbReference type="PANTHER" id="PTHR42982:SF1">
    <property type="entry name" value="SEC-INDEPENDENT PROTEIN TRANSLOCASE PROTEIN TATA"/>
    <property type="match status" value="1"/>
</dbReference>
<dbReference type="Pfam" id="PF02416">
    <property type="entry name" value="TatA_B_E"/>
    <property type="match status" value="1"/>
</dbReference>
<dbReference type="PRINTS" id="PR01506">
    <property type="entry name" value="TATBPROTEIN"/>
</dbReference>
<reference key="1">
    <citation type="submission" date="2008-10" db="EMBL/GenBank/DDBJ databases">
        <title>Genome sequence of Bacillus cereus G9842.</title>
        <authorList>
            <person name="Dodson R.J."/>
            <person name="Durkin A.S."/>
            <person name="Rosovitz M.J."/>
            <person name="Rasko D.A."/>
            <person name="Hoffmaster A."/>
            <person name="Ravel J."/>
            <person name="Sutton G."/>
        </authorList>
    </citation>
    <scope>NUCLEOTIDE SEQUENCE [LARGE SCALE GENOMIC DNA]</scope>
    <source>
        <strain>G9842</strain>
    </source>
</reference>
<feature type="chain" id="PRO_1000125189" description="Sec-independent protein translocase protein TatA">
    <location>
        <begin position="1"/>
        <end position="61"/>
    </location>
</feature>
<feature type="transmembrane region" description="Helical" evidence="1">
    <location>
        <begin position="1"/>
        <end position="21"/>
    </location>
</feature>
<organism>
    <name type="scientific">Bacillus cereus (strain G9842)</name>
    <dbReference type="NCBI Taxonomy" id="405531"/>
    <lineage>
        <taxon>Bacteria</taxon>
        <taxon>Bacillati</taxon>
        <taxon>Bacillota</taxon>
        <taxon>Bacilli</taxon>
        <taxon>Bacillales</taxon>
        <taxon>Bacillaceae</taxon>
        <taxon>Bacillus</taxon>
        <taxon>Bacillus cereus group</taxon>
    </lineage>
</organism>
<proteinExistence type="inferred from homology"/>
<protein>
    <recommendedName>
        <fullName evidence="1">Sec-independent protein translocase protein TatA</fullName>
    </recommendedName>
</protein>